<dbReference type="EC" id="2.1.1.186" evidence="1"/>
<dbReference type="EMBL" id="CP001607">
    <property type="protein sequence ID" value="ACS97470.1"/>
    <property type="molecule type" value="Genomic_DNA"/>
</dbReference>
<dbReference type="RefSeq" id="WP_005700839.1">
    <property type="nucleotide sequence ID" value="NC_012913.1"/>
</dbReference>
<dbReference type="SMR" id="C6ANQ9"/>
<dbReference type="KEGG" id="aap:NT05HA_1104"/>
<dbReference type="PATRIC" id="fig|634176.19.peg.1058"/>
<dbReference type="HOGENOM" id="CLU_043780_0_0_6"/>
<dbReference type="GO" id="GO:0005737">
    <property type="term" value="C:cytoplasm"/>
    <property type="evidence" value="ECO:0007669"/>
    <property type="project" value="UniProtKB-SubCell"/>
</dbReference>
<dbReference type="GO" id="GO:0008757">
    <property type="term" value="F:S-adenosylmethionine-dependent methyltransferase activity"/>
    <property type="evidence" value="ECO:0007669"/>
    <property type="project" value="UniProtKB-UniRule"/>
</dbReference>
<dbReference type="GO" id="GO:0032259">
    <property type="term" value="P:methylation"/>
    <property type="evidence" value="ECO:0007669"/>
    <property type="project" value="UniProtKB-KW"/>
</dbReference>
<dbReference type="GO" id="GO:0006364">
    <property type="term" value="P:rRNA processing"/>
    <property type="evidence" value="ECO:0007669"/>
    <property type="project" value="UniProtKB-UniRule"/>
</dbReference>
<dbReference type="Gene3D" id="3.30.2300.20">
    <property type="match status" value="1"/>
</dbReference>
<dbReference type="Gene3D" id="3.30.70.2810">
    <property type="match status" value="1"/>
</dbReference>
<dbReference type="Gene3D" id="3.40.50.150">
    <property type="entry name" value="Vaccinia Virus protein VP39"/>
    <property type="match status" value="1"/>
</dbReference>
<dbReference type="HAMAP" id="MF_01551">
    <property type="entry name" value="23SrRNA_methyltr_M"/>
    <property type="match status" value="1"/>
</dbReference>
<dbReference type="InterPro" id="IPR040739">
    <property type="entry name" value="RlmM_FDX"/>
</dbReference>
<dbReference type="InterPro" id="IPR048646">
    <property type="entry name" value="RlmM_THUMP-like"/>
</dbReference>
<dbReference type="InterPro" id="IPR002877">
    <property type="entry name" value="RNA_MeTrfase_FtsJ_dom"/>
</dbReference>
<dbReference type="InterPro" id="IPR011224">
    <property type="entry name" value="rRNA_MeTrfase_M"/>
</dbReference>
<dbReference type="InterPro" id="IPR029063">
    <property type="entry name" value="SAM-dependent_MTases_sf"/>
</dbReference>
<dbReference type="NCBIfam" id="NF008734">
    <property type="entry name" value="PRK11760.1"/>
    <property type="match status" value="1"/>
</dbReference>
<dbReference type="PANTHER" id="PTHR37524">
    <property type="entry name" value="RIBOSOMAL RNA LARGE SUBUNIT METHYLTRANSFERASE M"/>
    <property type="match status" value="1"/>
</dbReference>
<dbReference type="PANTHER" id="PTHR37524:SF2">
    <property type="entry name" value="RIBOSOMAL RNA METHYLTRANSFERASE FTSJ DOMAIN-CONTAINING PROTEIN"/>
    <property type="match status" value="1"/>
</dbReference>
<dbReference type="Pfam" id="PF01728">
    <property type="entry name" value="FtsJ"/>
    <property type="match status" value="1"/>
</dbReference>
<dbReference type="Pfam" id="PF18125">
    <property type="entry name" value="RlmM_FDX"/>
    <property type="match status" value="1"/>
</dbReference>
<dbReference type="Pfam" id="PF21239">
    <property type="entry name" value="RLMM_N"/>
    <property type="match status" value="1"/>
</dbReference>
<dbReference type="PIRSF" id="PIRSF028774">
    <property type="entry name" value="UCP028774"/>
    <property type="match status" value="1"/>
</dbReference>
<dbReference type="SUPFAM" id="SSF53335">
    <property type="entry name" value="S-adenosyl-L-methionine-dependent methyltransferases"/>
    <property type="match status" value="1"/>
</dbReference>
<name>RLMM_AGGAN</name>
<organism>
    <name type="scientific">Aggregatibacter aphrophilus (strain NJ8700)</name>
    <name type="common">Haemophilus aphrophilus</name>
    <dbReference type="NCBI Taxonomy" id="634176"/>
    <lineage>
        <taxon>Bacteria</taxon>
        <taxon>Pseudomonadati</taxon>
        <taxon>Pseudomonadota</taxon>
        <taxon>Gammaproteobacteria</taxon>
        <taxon>Pasteurellales</taxon>
        <taxon>Pasteurellaceae</taxon>
        <taxon>Aggregatibacter</taxon>
    </lineage>
</organism>
<comment type="function">
    <text evidence="1">Catalyzes the 2'-O-methylation at nucleotide C2498 in 23S rRNA.</text>
</comment>
<comment type="catalytic activity">
    <reaction evidence="1">
        <text>cytidine(2498) in 23S rRNA + S-adenosyl-L-methionine = 2'-O-methylcytidine(2498) in 23S rRNA + S-adenosyl-L-homocysteine + H(+)</text>
        <dbReference type="Rhea" id="RHEA:42788"/>
        <dbReference type="Rhea" id="RHEA-COMP:10244"/>
        <dbReference type="Rhea" id="RHEA-COMP:10245"/>
        <dbReference type="ChEBI" id="CHEBI:15378"/>
        <dbReference type="ChEBI" id="CHEBI:57856"/>
        <dbReference type="ChEBI" id="CHEBI:59789"/>
        <dbReference type="ChEBI" id="CHEBI:74495"/>
        <dbReference type="ChEBI" id="CHEBI:82748"/>
        <dbReference type="EC" id="2.1.1.186"/>
    </reaction>
</comment>
<comment type="subunit">
    <text evidence="1">Monomer.</text>
</comment>
<comment type="subcellular location">
    <subcellularLocation>
        <location evidence="1">Cytoplasm</location>
    </subcellularLocation>
</comment>
<comment type="similarity">
    <text evidence="1">Belongs to the class I-like SAM-binding methyltransferase superfamily. RNA methyltransferase RlmE family. RlmM subfamily.</text>
</comment>
<evidence type="ECO:0000255" key="1">
    <source>
        <dbReference type="HAMAP-Rule" id="MF_01551"/>
    </source>
</evidence>
<reference key="1">
    <citation type="journal article" date="2009" name="J. Bacteriol.">
        <title>Complete genome sequence of Aggregatibacter (Haemophilus) aphrophilus NJ8700.</title>
        <authorList>
            <person name="Di Bonaventura M.P."/>
            <person name="DeSalle R."/>
            <person name="Pop M."/>
            <person name="Nagarajan N."/>
            <person name="Figurski D.H."/>
            <person name="Fine D.H."/>
            <person name="Kaplan J.B."/>
            <person name="Planet P.J."/>
        </authorList>
    </citation>
    <scope>NUCLEOTIDE SEQUENCE [LARGE SCALE GENOMIC DNA]</scope>
    <source>
        <strain>NJ8700</strain>
    </source>
</reference>
<keyword id="KW-0963">Cytoplasm</keyword>
<keyword id="KW-0489">Methyltransferase</keyword>
<keyword id="KW-0698">rRNA processing</keyword>
<keyword id="KW-0949">S-adenosyl-L-methionine</keyword>
<keyword id="KW-0808">Transferase</keyword>
<gene>
    <name evidence="1" type="primary">rlmM</name>
    <name type="ordered locus">NT05HA_1104</name>
</gene>
<proteinExistence type="inferred from homology"/>
<sequence>MNKLALYCRMGFEREMAAEITDKAAEKGVFGFVRVIENSGYVIFECYQADEADYLARELDFQQLIFARQMLVVSDLLTDLPQQDRITPIVQQYQQIADKIDLKQSTELLVETADTNEAKELLGFCRKFTVPLRQTLKKQGWLRASNHAKCGLFLHLFFLRNNACYVGYSYNHNHSAHLMGIQRLKFPADAPSRSTLKLEEAILTFIPRQKETEWLNENQYAVDLGACPGGWTYQLVKRGLFVYAVDHGKMAASLHETGRIEHCAEDGFKFQPPKRQKIDWLVCDMVEKPSRIAELMTKWLLNGWCHSMIFNLKLPMKKRYAEVQQCLQYIADKLTQRGLAFQLKAKHLYHDREEITVYLRLL</sequence>
<feature type="chain" id="PRO_0000388978" description="Ribosomal RNA large subunit methyltransferase M">
    <location>
        <begin position="1"/>
        <end position="362"/>
    </location>
</feature>
<feature type="active site" description="Proton acceptor" evidence="1">
    <location>
        <position position="313"/>
    </location>
</feature>
<feature type="binding site" evidence="1">
    <location>
        <position position="194"/>
    </location>
    <ligand>
        <name>S-adenosyl-L-methionine</name>
        <dbReference type="ChEBI" id="CHEBI:59789"/>
    </ligand>
</feature>
<feature type="binding site" evidence="1">
    <location>
        <begin position="227"/>
        <end position="230"/>
    </location>
    <ligand>
        <name>S-adenosyl-L-methionine</name>
        <dbReference type="ChEBI" id="CHEBI:59789"/>
    </ligand>
</feature>
<feature type="binding site" evidence="1">
    <location>
        <position position="246"/>
    </location>
    <ligand>
        <name>S-adenosyl-L-methionine</name>
        <dbReference type="ChEBI" id="CHEBI:59789"/>
    </ligand>
</feature>
<feature type="binding site" evidence="1">
    <location>
        <position position="266"/>
    </location>
    <ligand>
        <name>S-adenosyl-L-methionine</name>
        <dbReference type="ChEBI" id="CHEBI:59789"/>
    </ligand>
</feature>
<feature type="binding site" evidence="1">
    <location>
        <position position="284"/>
    </location>
    <ligand>
        <name>S-adenosyl-L-methionine</name>
        <dbReference type="ChEBI" id="CHEBI:59789"/>
    </ligand>
</feature>
<protein>
    <recommendedName>
        <fullName evidence="1">Ribosomal RNA large subunit methyltransferase M</fullName>
        <ecNumber evidence="1">2.1.1.186</ecNumber>
    </recommendedName>
    <alternativeName>
        <fullName evidence="1">23S rRNA (cytidine2498-2'-O)-methyltransferase</fullName>
    </alternativeName>
    <alternativeName>
        <fullName evidence="1">23S rRNA 2'-O-ribose methyltransferase RlmM</fullName>
    </alternativeName>
</protein>
<accession>C6ANQ9</accession>